<keyword id="KW-0378">Hydrolase</keyword>
<keyword id="KW-0479">Metal-binding</keyword>
<keyword id="KW-0482">Metalloprotease</keyword>
<keyword id="KW-0645">Protease</keyword>
<keyword id="KW-1185">Reference proteome</keyword>
<keyword id="KW-0862">Zinc</keyword>
<proteinExistence type="inferred from homology"/>
<protein>
    <recommendedName>
        <fullName>Oligoendopeptidase F homolog</fullName>
        <ecNumber>3.4.24.-</ecNumber>
    </recommendedName>
</protein>
<organism>
    <name type="scientific">Mycoplasma genitalium (strain ATCC 33530 / DSM 19775 / NCTC 10195 / G37)</name>
    <name type="common">Mycoplasmoides genitalium</name>
    <dbReference type="NCBI Taxonomy" id="243273"/>
    <lineage>
        <taxon>Bacteria</taxon>
        <taxon>Bacillati</taxon>
        <taxon>Mycoplasmatota</taxon>
        <taxon>Mycoplasmoidales</taxon>
        <taxon>Mycoplasmoidaceae</taxon>
        <taxon>Mycoplasmoides</taxon>
    </lineage>
</organism>
<gene>
    <name type="primary">pepF</name>
    <name type="ordered locus">MG183</name>
</gene>
<sequence>MKNSYKWDLSVLLNNQSLQANFLKIQTVSEALIKAYNNGLCFTNKTSFEQFLAIDDKFTELENRYTNYLYNKQNENNLDKEVNDAIFAYQSFKNNHNLAFSTLQQELYNHEKLIKDYLTDPKLAVYKRNLMLVFRDKPHQLSSQTQSLLSQINPCFNQAERIFNILSTADLNLQPVVYQNKKYPINSVSDYQSLLENTNRGIRKACYEKWIEIYWTNRNSLSLSLVENYIQLENFAKLKNHPSYIAQTAFNDEIEVGFIDFVYQQVAQFAKTFQAFIRLKKQIYKHVLKVNKVEPYDLTLTLFKTKKSYTIEQAKQDALKVLDLLGDNYIKIVKKAFNENWIDWLADKNKYTGAYSISNVKGLEHFFILMNFDKTKSSLNTLVHELGHSVHSWYASQHQSQNIDPTIFYAEIASIANELLLCYYELQLYKNNHKQLIASLLSQINHFFGATTRQIMFSQFEKDTLYLIRVNQKPDFKTLIKIYANTAVKYQGFKPEVVANKLKKTQYQKSLSHIIAIPHFYAGNFYVYKYAIGQVAGILVAKKINSGDKKMKDNYFKFLSSGSSLAPLETIKLLGIDLTSPQPWQEAHNEVKRWLKIVKQSFKKLQK</sequence>
<comment type="cofactor">
    <cofactor evidence="1">
        <name>Zn(2+)</name>
        <dbReference type="ChEBI" id="CHEBI:29105"/>
    </cofactor>
    <text evidence="1">Binds 1 zinc ion.</text>
</comment>
<comment type="similarity">
    <text evidence="3">Belongs to the peptidase M3B family.</text>
</comment>
<name>PEPF_MYCGE</name>
<accession>P47429</accession>
<evidence type="ECO:0000250" key="1"/>
<evidence type="ECO:0000255" key="2">
    <source>
        <dbReference type="PROSITE-ProRule" id="PRU10095"/>
    </source>
</evidence>
<evidence type="ECO:0000305" key="3"/>
<dbReference type="EC" id="3.4.24.-"/>
<dbReference type="EMBL" id="L43967">
    <property type="protein sequence ID" value="AAC71402.1"/>
    <property type="molecule type" value="Genomic_DNA"/>
</dbReference>
<dbReference type="EMBL" id="U02198">
    <property type="protein sequence ID" value="AAD12484.1"/>
    <property type="molecule type" value="Genomic_DNA"/>
</dbReference>
<dbReference type="PIR" id="C64220">
    <property type="entry name" value="C64220"/>
</dbReference>
<dbReference type="RefSeq" id="WP_009885868.1">
    <property type="nucleotide sequence ID" value="NC_000908.2"/>
</dbReference>
<dbReference type="SMR" id="P47429"/>
<dbReference type="STRING" id="243273.MG_183"/>
<dbReference type="GeneID" id="88282315"/>
<dbReference type="KEGG" id="mge:MG_183"/>
<dbReference type="eggNOG" id="COG1164">
    <property type="taxonomic scope" value="Bacteria"/>
</dbReference>
<dbReference type="HOGENOM" id="CLU_021290_2_0_14"/>
<dbReference type="InParanoid" id="P47429"/>
<dbReference type="OrthoDB" id="9766487at2"/>
<dbReference type="BioCyc" id="MGEN243273:G1GJ2-207-MONOMER"/>
<dbReference type="Proteomes" id="UP000000807">
    <property type="component" value="Chromosome"/>
</dbReference>
<dbReference type="GO" id="GO:0046872">
    <property type="term" value="F:metal ion binding"/>
    <property type="evidence" value="ECO:0007669"/>
    <property type="project" value="UniProtKB-KW"/>
</dbReference>
<dbReference type="GO" id="GO:0004222">
    <property type="term" value="F:metalloendopeptidase activity"/>
    <property type="evidence" value="ECO:0000318"/>
    <property type="project" value="GO_Central"/>
</dbReference>
<dbReference type="GO" id="GO:0006518">
    <property type="term" value="P:peptide metabolic process"/>
    <property type="evidence" value="ECO:0000318"/>
    <property type="project" value="GO_Central"/>
</dbReference>
<dbReference type="GO" id="GO:0006508">
    <property type="term" value="P:proteolysis"/>
    <property type="evidence" value="ECO:0000318"/>
    <property type="project" value="GO_Central"/>
</dbReference>
<dbReference type="CDD" id="cd09608">
    <property type="entry name" value="M3B_PepF"/>
    <property type="match status" value="1"/>
</dbReference>
<dbReference type="Gene3D" id="1.10.1370.20">
    <property type="entry name" value="Oligoendopeptidase f, C-terminal domain"/>
    <property type="match status" value="1"/>
</dbReference>
<dbReference type="Gene3D" id="1.20.140.70">
    <property type="entry name" value="Oligopeptidase f, N-terminal domain"/>
    <property type="match status" value="1"/>
</dbReference>
<dbReference type="InterPro" id="IPR013647">
    <property type="entry name" value="OligopepF_N_dom"/>
</dbReference>
<dbReference type="InterPro" id="IPR042088">
    <property type="entry name" value="OligoPept_F_C"/>
</dbReference>
<dbReference type="InterPro" id="IPR001567">
    <property type="entry name" value="Pept_M3A_M3B_dom"/>
</dbReference>
<dbReference type="InterPro" id="IPR004438">
    <property type="entry name" value="Peptidase_M3B"/>
</dbReference>
<dbReference type="NCBIfam" id="TIGR00181">
    <property type="entry name" value="pepF"/>
    <property type="match status" value="1"/>
</dbReference>
<dbReference type="Pfam" id="PF01432">
    <property type="entry name" value="Peptidase_M3"/>
    <property type="match status" value="1"/>
</dbReference>
<dbReference type="Pfam" id="PF08439">
    <property type="entry name" value="Peptidase_M3_N"/>
    <property type="match status" value="1"/>
</dbReference>
<dbReference type="SUPFAM" id="SSF55486">
    <property type="entry name" value="Metalloproteases ('zincins'), catalytic domain"/>
    <property type="match status" value="1"/>
</dbReference>
<dbReference type="PROSITE" id="PS00142">
    <property type="entry name" value="ZINC_PROTEASE"/>
    <property type="match status" value="1"/>
</dbReference>
<reference key="1">
    <citation type="journal article" date="1995" name="Science">
        <title>The minimal gene complement of Mycoplasma genitalium.</title>
        <authorList>
            <person name="Fraser C.M."/>
            <person name="Gocayne J.D."/>
            <person name="White O."/>
            <person name="Adams M.D."/>
            <person name="Clayton R.A."/>
            <person name="Fleischmann R.D."/>
            <person name="Bult C.J."/>
            <person name="Kerlavage A.R."/>
            <person name="Sutton G.G."/>
            <person name="Kelley J.M."/>
            <person name="Fritchman J.L."/>
            <person name="Weidman J.F."/>
            <person name="Small K.V."/>
            <person name="Sandusky M."/>
            <person name="Fuhrmann J.L."/>
            <person name="Nguyen D.T."/>
            <person name="Utterback T.R."/>
            <person name="Saudek D.M."/>
            <person name="Phillips C.A."/>
            <person name="Merrick J.M."/>
            <person name="Tomb J.-F."/>
            <person name="Dougherty B.A."/>
            <person name="Bott K.F."/>
            <person name="Hu P.-C."/>
            <person name="Lucier T.S."/>
            <person name="Peterson S.N."/>
            <person name="Smith H.O."/>
            <person name="Hutchison C.A. III"/>
            <person name="Venter J.C."/>
        </authorList>
    </citation>
    <scope>NUCLEOTIDE SEQUENCE [LARGE SCALE GENOMIC DNA]</scope>
    <source>
        <strain>ATCC 33530 / DSM 19775 / NCTC 10195 / G37</strain>
    </source>
</reference>
<reference key="2">
    <citation type="journal article" date="1993" name="J. Bacteriol.">
        <title>A survey of the Mycoplasma genitalium genome by using random sequencing.</title>
        <authorList>
            <person name="Peterson S.N."/>
            <person name="Hu P.-C."/>
            <person name="Bott K.F."/>
            <person name="Hutchison C.A. III"/>
        </authorList>
    </citation>
    <scope>NUCLEOTIDE SEQUENCE [GENOMIC DNA] OF 10-111</scope>
    <source>
        <strain>ATCC 33530 / DSM 19775 / NCTC 10195 / G37</strain>
    </source>
</reference>
<feature type="chain" id="PRO_0000078167" description="Oligoendopeptidase F homolog">
    <location>
        <begin position="1"/>
        <end position="607"/>
    </location>
</feature>
<feature type="active site" evidence="2">
    <location>
        <position position="385"/>
    </location>
</feature>
<feature type="binding site" evidence="2">
    <location>
        <position position="384"/>
    </location>
    <ligand>
        <name>Zn(2+)</name>
        <dbReference type="ChEBI" id="CHEBI:29105"/>
        <note>catalytic</note>
    </ligand>
</feature>
<feature type="binding site" evidence="2">
    <location>
        <position position="388"/>
    </location>
    <ligand>
        <name>Zn(2+)</name>
        <dbReference type="ChEBI" id="CHEBI:29105"/>
        <note>catalytic</note>
    </ligand>
</feature>
<feature type="binding site" evidence="2">
    <location>
        <position position="391"/>
    </location>
    <ligand>
        <name>Zn(2+)</name>
        <dbReference type="ChEBI" id="CHEBI:29105"/>
        <note>catalytic</note>
    </ligand>
</feature>